<accession>O33012</accession>
<organism>
    <name type="scientific">Mycobacterium leprae (strain TN)</name>
    <dbReference type="NCBI Taxonomy" id="272631"/>
    <lineage>
        <taxon>Bacteria</taxon>
        <taxon>Bacillati</taxon>
        <taxon>Actinomycetota</taxon>
        <taxon>Actinomycetes</taxon>
        <taxon>Mycobacteriales</taxon>
        <taxon>Mycobacteriaceae</taxon>
        <taxon>Mycobacterium</taxon>
    </lineage>
</organism>
<dbReference type="EMBL" id="Z97369">
    <property type="protein sequence ID" value="CAB10613.1"/>
    <property type="molecule type" value="Genomic_DNA"/>
</dbReference>
<dbReference type="EMBL" id="AL583922">
    <property type="protein sequence ID" value="CAC30574.1"/>
    <property type="molecule type" value="Genomic_DNA"/>
</dbReference>
<dbReference type="PIR" id="A87112">
    <property type="entry name" value="A87112"/>
</dbReference>
<dbReference type="RefSeq" id="NP_302118.1">
    <property type="nucleotide sequence ID" value="NC_002677.1"/>
</dbReference>
<dbReference type="RefSeq" id="WP_010908439.1">
    <property type="nucleotide sequence ID" value="NC_002677.1"/>
</dbReference>
<dbReference type="SMR" id="O33012"/>
<dbReference type="STRING" id="272631.gene:17575464"/>
<dbReference type="KEGG" id="mle:ML1623"/>
<dbReference type="PATRIC" id="fig|272631.5.peg.3058"/>
<dbReference type="Leproma" id="ML1623"/>
<dbReference type="eggNOG" id="COG0326">
    <property type="taxonomic scope" value="Bacteria"/>
</dbReference>
<dbReference type="HOGENOM" id="CLU_006684_3_0_11"/>
<dbReference type="OrthoDB" id="9802640at2"/>
<dbReference type="Proteomes" id="UP000000806">
    <property type="component" value="Chromosome"/>
</dbReference>
<dbReference type="GO" id="GO:0005737">
    <property type="term" value="C:cytoplasm"/>
    <property type="evidence" value="ECO:0007669"/>
    <property type="project" value="UniProtKB-SubCell"/>
</dbReference>
<dbReference type="GO" id="GO:0005524">
    <property type="term" value="F:ATP binding"/>
    <property type="evidence" value="ECO:0007669"/>
    <property type="project" value="UniProtKB-UniRule"/>
</dbReference>
<dbReference type="GO" id="GO:0016887">
    <property type="term" value="F:ATP hydrolysis activity"/>
    <property type="evidence" value="ECO:0007669"/>
    <property type="project" value="InterPro"/>
</dbReference>
<dbReference type="GO" id="GO:0140662">
    <property type="term" value="F:ATP-dependent protein folding chaperone"/>
    <property type="evidence" value="ECO:0007669"/>
    <property type="project" value="InterPro"/>
</dbReference>
<dbReference type="GO" id="GO:0051082">
    <property type="term" value="F:unfolded protein binding"/>
    <property type="evidence" value="ECO:0007669"/>
    <property type="project" value="UniProtKB-UniRule"/>
</dbReference>
<dbReference type="CDD" id="cd16927">
    <property type="entry name" value="HATPase_Hsp90-like"/>
    <property type="match status" value="1"/>
</dbReference>
<dbReference type="FunFam" id="1.20.120.790:FF:000006">
    <property type="entry name" value="Chaperone protein HtpG"/>
    <property type="match status" value="1"/>
</dbReference>
<dbReference type="FunFam" id="3.30.230.80:FF:000002">
    <property type="entry name" value="Molecular chaperone HtpG"/>
    <property type="match status" value="1"/>
</dbReference>
<dbReference type="FunFam" id="3.30.565.10:FF:000009">
    <property type="entry name" value="Molecular chaperone HtpG"/>
    <property type="match status" value="1"/>
</dbReference>
<dbReference type="Gene3D" id="3.30.230.80">
    <property type="match status" value="1"/>
</dbReference>
<dbReference type="Gene3D" id="3.40.50.11260">
    <property type="match status" value="1"/>
</dbReference>
<dbReference type="Gene3D" id="1.20.120.790">
    <property type="entry name" value="Heat shock protein 90, C-terminal domain"/>
    <property type="match status" value="1"/>
</dbReference>
<dbReference type="Gene3D" id="3.30.565.10">
    <property type="entry name" value="Histidine kinase-like ATPase, C-terminal domain"/>
    <property type="match status" value="1"/>
</dbReference>
<dbReference type="HAMAP" id="MF_00505">
    <property type="entry name" value="HSP90"/>
    <property type="match status" value="1"/>
</dbReference>
<dbReference type="InterPro" id="IPR036890">
    <property type="entry name" value="HATPase_C_sf"/>
</dbReference>
<dbReference type="InterPro" id="IPR019805">
    <property type="entry name" value="Heat_shock_protein_90_CS"/>
</dbReference>
<dbReference type="InterPro" id="IPR037196">
    <property type="entry name" value="HSP90_C"/>
</dbReference>
<dbReference type="InterPro" id="IPR001404">
    <property type="entry name" value="Hsp90_fam"/>
</dbReference>
<dbReference type="InterPro" id="IPR020575">
    <property type="entry name" value="Hsp90_N"/>
</dbReference>
<dbReference type="InterPro" id="IPR020568">
    <property type="entry name" value="Ribosomal_Su5_D2-typ_SF"/>
</dbReference>
<dbReference type="NCBIfam" id="NF003555">
    <property type="entry name" value="PRK05218.1"/>
    <property type="match status" value="1"/>
</dbReference>
<dbReference type="PANTHER" id="PTHR11528">
    <property type="entry name" value="HEAT SHOCK PROTEIN 90 FAMILY MEMBER"/>
    <property type="match status" value="1"/>
</dbReference>
<dbReference type="Pfam" id="PF13589">
    <property type="entry name" value="HATPase_c_3"/>
    <property type="match status" value="1"/>
</dbReference>
<dbReference type="Pfam" id="PF00183">
    <property type="entry name" value="HSP90"/>
    <property type="match status" value="1"/>
</dbReference>
<dbReference type="PIRSF" id="PIRSF002583">
    <property type="entry name" value="Hsp90"/>
    <property type="match status" value="1"/>
</dbReference>
<dbReference type="PRINTS" id="PR00775">
    <property type="entry name" value="HEATSHOCK90"/>
</dbReference>
<dbReference type="SMART" id="SM00387">
    <property type="entry name" value="HATPase_c"/>
    <property type="match status" value="1"/>
</dbReference>
<dbReference type="SUPFAM" id="SSF55874">
    <property type="entry name" value="ATPase domain of HSP90 chaperone/DNA topoisomerase II/histidine kinase"/>
    <property type="match status" value="1"/>
</dbReference>
<dbReference type="SUPFAM" id="SSF110942">
    <property type="entry name" value="HSP90 C-terminal domain"/>
    <property type="match status" value="1"/>
</dbReference>
<dbReference type="SUPFAM" id="SSF54211">
    <property type="entry name" value="Ribosomal protein S5 domain 2-like"/>
    <property type="match status" value="1"/>
</dbReference>
<dbReference type="PROSITE" id="PS00298">
    <property type="entry name" value="HSP90"/>
    <property type="match status" value="1"/>
</dbReference>
<name>HTPG_MYCLE</name>
<proteinExistence type="inferred from homology"/>
<sequence length="656" mass="73866">MSAQVEQLEFQAEARQLLDLMVHSVYSNKDAFLRELISNASDALDKLRLEAFRNKDLDPRTVDTSDLHIEIEVDKNTRILTVRDNGIGMTRAEVVDLIGTLAKSGTAKLRQKLHAAKNLKDTAASEGLIGQFGIGFYSSFMVANKVELLTRKAGETAATRWSSDGEATYTIESVDEAPQGTSVTLHLKPEDFEDELHDYTSEWKIRELVKKYSDFIAWPIRMEVERRAPATSDGEGADGEEQVTIETQTINSMKALWTKSKDEVSEDEYKEFYKHIAHAWDDPLEVIAMKAEGTFEYQALLFIPSHAPFDLFNSDAKIGMQLYVKRVFIMSDCDQLMPMYLRFVKGVVDAEDMSLNVSREILQQNRQINAIRRRLTKKVLSAIKDLQAERPQDYRTFWTQFGKVLKEGLMSDSDNRDTLLHISSFASTHSDEEPTTLAQYVERMKDGQDQIFYATGESRQQVMNSPHLEAFKAKGYEVLLLTDPVDEVWVGMAPEFDGKPLKSVARGEVDLESEEEKTAHEAERKEQEQNFAGLVNWLKETLSDHVKEVRLSTRLTESPACLITDAFGITPALARIYRASGQDVPFGKRILELNPNHPLITGLQQAHENGGDDTHLRQLSETAELLYGTALLAEGGALENPAKFAGLLADLLSRSM</sequence>
<reference key="1">
    <citation type="journal article" date="2001" name="Nature">
        <title>Massive gene decay in the leprosy bacillus.</title>
        <authorList>
            <person name="Cole S.T."/>
            <person name="Eiglmeier K."/>
            <person name="Parkhill J."/>
            <person name="James K.D."/>
            <person name="Thomson N.R."/>
            <person name="Wheeler P.R."/>
            <person name="Honore N."/>
            <person name="Garnier T."/>
            <person name="Churcher C.M."/>
            <person name="Harris D.E."/>
            <person name="Mungall K.L."/>
            <person name="Basham D."/>
            <person name="Brown D."/>
            <person name="Chillingworth T."/>
            <person name="Connor R."/>
            <person name="Davies R.M."/>
            <person name="Devlin K."/>
            <person name="Duthoy S."/>
            <person name="Feltwell T."/>
            <person name="Fraser A."/>
            <person name="Hamlin N."/>
            <person name="Holroyd S."/>
            <person name="Hornsby T."/>
            <person name="Jagels K."/>
            <person name="Lacroix C."/>
            <person name="Maclean J."/>
            <person name="Moule S."/>
            <person name="Murphy L.D."/>
            <person name="Oliver K."/>
            <person name="Quail M.A."/>
            <person name="Rajandream M.A."/>
            <person name="Rutherford K.M."/>
            <person name="Rutter S."/>
            <person name="Seeger K."/>
            <person name="Simon S."/>
            <person name="Simmonds M."/>
            <person name="Skelton J."/>
            <person name="Squares R."/>
            <person name="Squares S."/>
            <person name="Stevens K."/>
            <person name="Taylor K."/>
            <person name="Whitehead S."/>
            <person name="Woodward J.R."/>
            <person name="Barrell B.G."/>
        </authorList>
    </citation>
    <scope>NUCLEOTIDE SEQUENCE [LARGE SCALE GENOMIC DNA]</scope>
    <source>
        <strain>TN</strain>
    </source>
</reference>
<keyword id="KW-0067">ATP-binding</keyword>
<keyword id="KW-0143">Chaperone</keyword>
<keyword id="KW-0963">Cytoplasm</keyword>
<keyword id="KW-0547">Nucleotide-binding</keyword>
<keyword id="KW-1185">Reference proteome</keyword>
<keyword id="KW-0346">Stress response</keyword>
<evidence type="ECO:0000255" key="1">
    <source>
        <dbReference type="HAMAP-Rule" id="MF_00505"/>
    </source>
</evidence>
<protein>
    <recommendedName>
        <fullName evidence="1">Chaperone protein HtpG</fullName>
    </recommendedName>
    <alternativeName>
        <fullName evidence="1">Heat shock protein HtpG</fullName>
    </alternativeName>
    <alternativeName>
        <fullName evidence="1">High temperature protein G</fullName>
    </alternativeName>
</protein>
<comment type="function">
    <text evidence="1">Molecular chaperone. Has ATPase activity.</text>
</comment>
<comment type="subunit">
    <text evidence="1">Homodimer.</text>
</comment>
<comment type="subcellular location">
    <subcellularLocation>
        <location evidence="1">Cytoplasm</location>
    </subcellularLocation>
</comment>
<comment type="similarity">
    <text evidence="1">Belongs to the heat shock protein 90 family.</text>
</comment>
<feature type="chain" id="PRO_0000062994" description="Chaperone protein HtpG">
    <location>
        <begin position="1"/>
        <end position="656"/>
    </location>
</feature>
<feature type="region of interest" description="A; substrate-binding" evidence="1">
    <location>
        <begin position="1"/>
        <end position="359"/>
    </location>
</feature>
<feature type="region of interest" description="B" evidence="1">
    <location>
        <begin position="360"/>
        <end position="575"/>
    </location>
</feature>
<feature type="region of interest" description="C" evidence="1">
    <location>
        <begin position="576"/>
        <end position="656"/>
    </location>
</feature>
<gene>
    <name evidence="1" type="primary">htpG</name>
    <name type="ordered locus">ML1623</name>
    <name type="ORF">MLCB250.19c</name>
</gene>